<name>APBC_HELPY</name>
<evidence type="ECO:0000255" key="1">
    <source>
        <dbReference type="HAMAP-Rule" id="MF_02040"/>
    </source>
</evidence>
<evidence type="ECO:0000305" key="2"/>
<dbReference type="EMBL" id="AE000511">
    <property type="protein sequence ID" value="AAD07271.1"/>
    <property type="molecule type" value="Genomic_DNA"/>
</dbReference>
<dbReference type="PIR" id="G64545">
    <property type="entry name" value="G64545"/>
</dbReference>
<dbReference type="RefSeq" id="NP_207006.1">
    <property type="nucleotide sequence ID" value="NC_000915.1"/>
</dbReference>
<dbReference type="SMR" id="O24999"/>
<dbReference type="FunCoup" id="O24999">
    <property type="interactions" value="325"/>
</dbReference>
<dbReference type="STRING" id="85962.HP_0207"/>
<dbReference type="PaxDb" id="85962-C694_01035"/>
<dbReference type="EnsemblBacteria" id="AAD07271">
    <property type="protein sequence ID" value="AAD07271"/>
    <property type="gene ID" value="HP_0207"/>
</dbReference>
<dbReference type="KEGG" id="heo:C694_01035"/>
<dbReference type="KEGG" id="hpy:HP_0207"/>
<dbReference type="PATRIC" id="fig|85962.47.peg.223"/>
<dbReference type="eggNOG" id="COG0489">
    <property type="taxonomic scope" value="Bacteria"/>
</dbReference>
<dbReference type="InParanoid" id="O24999"/>
<dbReference type="OrthoDB" id="9809679at2"/>
<dbReference type="PhylomeDB" id="O24999"/>
<dbReference type="Proteomes" id="UP000000429">
    <property type="component" value="Chromosome"/>
</dbReference>
<dbReference type="GO" id="GO:0051539">
    <property type="term" value="F:4 iron, 4 sulfur cluster binding"/>
    <property type="evidence" value="ECO:0000318"/>
    <property type="project" value="GO_Central"/>
</dbReference>
<dbReference type="GO" id="GO:0005524">
    <property type="term" value="F:ATP binding"/>
    <property type="evidence" value="ECO:0007669"/>
    <property type="project" value="UniProtKB-UniRule"/>
</dbReference>
<dbReference type="GO" id="GO:0016887">
    <property type="term" value="F:ATP hydrolysis activity"/>
    <property type="evidence" value="ECO:0007669"/>
    <property type="project" value="UniProtKB-UniRule"/>
</dbReference>
<dbReference type="GO" id="GO:0140663">
    <property type="term" value="F:ATP-dependent FeS chaperone activity"/>
    <property type="evidence" value="ECO:0007669"/>
    <property type="project" value="InterPro"/>
</dbReference>
<dbReference type="GO" id="GO:0046872">
    <property type="term" value="F:metal ion binding"/>
    <property type="evidence" value="ECO:0007669"/>
    <property type="project" value="UniProtKB-KW"/>
</dbReference>
<dbReference type="GO" id="GO:0016226">
    <property type="term" value="P:iron-sulfur cluster assembly"/>
    <property type="evidence" value="ECO:0000318"/>
    <property type="project" value="GO_Central"/>
</dbReference>
<dbReference type="CDD" id="cd02037">
    <property type="entry name" value="Mrp_NBP35"/>
    <property type="match status" value="1"/>
</dbReference>
<dbReference type="FunFam" id="3.40.50.300:FF:000304">
    <property type="entry name" value="Iron-sulfur cluster carrier protein"/>
    <property type="match status" value="1"/>
</dbReference>
<dbReference type="Gene3D" id="3.30.300.130">
    <property type="entry name" value="Fe-S cluster assembly (FSCA)"/>
    <property type="match status" value="1"/>
</dbReference>
<dbReference type="Gene3D" id="3.40.50.300">
    <property type="entry name" value="P-loop containing nucleotide triphosphate hydrolases"/>
    <property type="match status" value="1"/>
</dbReference>
<dbReference type="HAMAP" id="MF_02040">
    <property type="entry name" value="Mrp_NBP35"/>
    <property type="match status" value="1"/>
</dbReference>
<dbReference type="InterPro" id="IPR034904">
    <property type="entry name" value="FSCA_dom_sf"/>
</dbReference>
<dbReference type="InterPro" id="IPR002744">
    <property type="entry name" value="MIP18-like"/>
</dbReference>
<dbReference type="InterPro" id="IPR000808">
    <property type="entry name" value="Mrp-like_CS"/>
</dbReference>
<dbReference type="InterPro" id="IPR019591">
    <property type="entry name" value="Mrp/NBP35_ATP-bd"/>
</dbReference>
<dbReference type="InterPro" id="IPR044304">
    <property type="entry name" value="NUBPL-like"/>
</dbReference>
<dbReference type="InterPro" id="IPR027417">
    <property type="entry name" value="P-loop_NTPase"/>
</dbReference>
<dbReference type="InterPro" id="IPR033756">
    <property type="entry name" value="YlxH/NBP35"/>
</dbReference>
<dbReference type="PANTHER" id="PTHR42961">
    <property type="entry name" value="IRON-SULFUR PROTEIN NUBPL"/>
    <property type="match status" value="1"/>
</dbReference>
<dbReference type="PANTHER" id="PTHR42961:SF2">
    <property type="entry name" value="IRON-SULFUR PROTEIN NUBPL"/>
    <property type="match status" value="1"/>
</dbReference>
<dbReference type="Pfam" id="PF01883">
    <property type="entry name" value="FeS_assembly_P"/>
    <property type="match status" value="1"/>
</dbReference>
<dbReference type="Pfam" id="PF10609">
    <property type="entry name" value="ParA"/>
    <property type="match status" value="1"/>
</dbReference>
<dbReference type="SUPFAM" id="SSF117916">
    <property type="entry name" value="Fe-S cluster assembly (FSCA) domain-like"/>
    <property type="match status" value="1"/>
</dbReference>
<dbReference type="SUPFAM" id="SSF52540">
    <property type="entry name" value="P-loop containing nucleoside triphosphate hydrolases"/>
    <property type="match status" value="1"/>
</dbReference>
<dbReference type="PROSITE" id="PS01215">
    <property type="entry name" value="MRP"/>
    <property type="match status" value="1"/>
</dbReference>
<proteinExistence type="inferred from homology"/>
<protein>
    <recommendedName>
        <fullName evidence="1">Iron-sulfur cluster carrier protein</fullName>
    </recommendedName>
</protein>
<sequence length="368" mass="40028">MLTQEDVLNALKTIIYPNFEKDIVSFGFVKNITLHDDQLGLLIEIPSSSEETSAILRENISKAMQEKGVKALNLDIKTPPKPQAPKPTTKNLAKNIKHVVMISSGKGGVGKSTTSVNLSIALANLNQKVGLLDADVYGPNIPRMMGLQSADVIMDPSGKKLIPLKAFGVSVMSMGLLYDEGQSLIWRGPMLMRAIEQMLSDIIWGDLDVLVVDMPPGTGDAQLTLAQAVPLSAGITVTTPQIVSLDDAKRSLDMFKKLHIPIAGIVENMGSFVCEHCKKESEIFGSNSMSELLEAYHTQILAKLPLEPKVRLGGDRGEPIVISHPNSVSAKIFEKMAQDLSAFLERVKKEKLADNKDIQPTQTHACSH</sequence>
<reference key="1">
    <citation type="journal article" date="1997" name="Nature">
        <title>The complete genome sequence of the gastric pathogen Helicobacter pylori.</title>
        <authorList>
            <person name="Tomb J.-F."/>
            <person name="White O."/>
            <person name="Kerlavage A.R."/>
            <person name="Clayton R.A."/>
            <person name="Sutton G.G."/>
            <person name="Fleischmann R.D."/>
            <person name="Ketchum K.A."/>
            <person name="Klenk H.-P."/>
            <person name="Gill S.R."/>
            <person name="Dougherty B.A."/>
            <person name="Nelson K.E."/>
            <person name="Quackenbush J."/>
            <person name="Zhou L."/>
            <person name="Kirkness E.F."/>
            <person name="Peterson S.N."/>
            <person name="Loftus B.J."/>
            <person name="Richardson D.L."/>
            <person name="Dodson R.J."/>
            <person name="Khalak H.G."/>
            <person name="Glodek A."/>
            <person name="McKenney K."/>
            <person name="FitzGerald L.M."/>
            <person name="Lee N."/>
            <person name="Adams M.D."/>
            <person name="Hickey E.K."/>
            <person name="Berg D.E."/>
            <person name="Gocayne J.D."/>
            <person name="Utterback T.R."/>
            <person name="Peterson J.D."/>
            <person name="Kelley J.M."/>
            <person name="Cotton M.D."/>
            <person name="Weidman J.F."/>
            <person name="Fujii C."/>
            <person name="Bowman C."/>
            <person name="Watthey L."/>
            <person name="Wallin E."/>
            <person name="Hayes W.S."/>
            <person name="Borodovsky M."/>
            <person name="Karp P.D."/>
            <person name="Smith H.O."/>
            <person name="Fraser C.M."/>
            <person name="Venter J.C."/>
        </authorList>
    </citation>
    <scope>NUCLEOTIDE SEQUENCE [LARGE SCALE GENOMIC DNA]</scope>
    <source>
        <strain>ATCC 700392 / 26695</strain>
    </source>
</reference>
<accession>O24999</accession>
<feature type="chain" id="PRO_0000184935" description="Iron-sulfur cluster carrier protein">
    <location>
        <begin position="1"/>
        <end position="368"/>
    </location>
</feature>
<feature type="binding site" evidence="1">
    <location>
        <begin position="105"/>
        <end position="112"/>
    </location>
    <ligand>
        <name>ATP</name>
        <dbReference type="ChEBI" id="CHEBI:30616"/>
    </ligand>
</feature>
<comment type="function">
    <text evidence="1">Binds and transfers iron-sulfur (Fe-S) clusters to target apoproteins. Can hydrolyze ATP.</text>
</comment>
<comment type="subunit">
    <text evidence="1">Homodimer.</text>
</comment>
<comment type="similarity">
    <text evidence="2">In the N-terminal section; belongs to the MIP18 family.</text>
</comment>
<comment type="similarity">
    <text evidence="2">In the C-terminal section; belongs to the Mrp/NBP35 ATP-binding proteins family.</text>
</comment>
<organism>
    <name type="scientific">Helicobacter pylori (strain ATCC 700392 / 26695)</name>
    <name type="common">Campylobacter pylori</name>
    <dbReference type="NCBI Taxonomy" id="85962"/>
    <lineage>
        <taxon>Bacteria</taxon>
        <taxon>Pseudomonadati</taxon>
        <taxon>Campylobacterota</taxon>
        <taxon>Epsilonproteobacteria</taxon>
        <taxon>Campylobacterales</taxon>
        <taxon>Helicobacteraceae</taxon>
        <taxon>Helicobacter</taxon>
    </lineage>
</organism>
<keyword id="KW-0067">ATP-binding</keyword>
<keyword id="KW-0378">Hydrolase</keyword>
<keyword id="KW-0408">Iron</keyword>
<keyword id="KW-0411">Iron-sulfur</keyword>
<keyword id="KW-0479">Metal-binding</keyword>
<keyword id="KW-0547">Nucleotide-binding</keyword>
<keyword id="KW-1185">Reference proteome</keyword>
<gene>
    <name type="primary">mrp</name>
    <name type="ordered locus">HP_0207</name>
</gene>